<protein>
    <recommendedName>
        <fullName evidence="1">UPF0756 membrane protein HAPS_1649</fullName>
    </recommendedName>
</protein>
<accession>B8F792</accession>
<sequence length="150" mass="15621">MSLQFNSVALLLVALILLGIFSQNSAVTISAAVLLIMQQTLLSKYVPYLEQYGIKIGIIILTIGVLAPLVSGRIALPELVQLINWKMIVAIIAGIVVAWLGGRGVTLMGNQPVLVTGLLIGTIIGVAFLKGVPVGPLIAAGILSLIIGKS</sequence>
<dbReference type="EMBL" id="CP001321">
    <property type="protein sequence ID" value="ACL33194.1"/>
    <property type="molecule type" value="Genomic_DNA"/>
</dbReference>
<dbReference type="RefSeq" id="WP_015939870.1">
    <property type="nucleotide sequence ID" value="NC_011852.1"/>
</dbReference>
<dbReference type="STRING" id="557723.HAPS_1649"/>
<dbReference type="KEGG" id="hap:HAPS_1649"/>
<dbReference type="PATRIC" id="fig|557723.8.peg.1619"/>
<dbReference type="HOGENOM" id="CLU_125889_0_0_6"/>
<dbReference type="Proteomes" id="UP000006743">
    <property type="component" value="Chromosome"/>
</dbReference>
<dbReference type="GO" id="GO:0005886">
    <property type="term" value="C:plasma membrane"/>
    <property type="evidence" value="ECO:0007669"/>
    <property type="project" value="UniProtKB-SubCell"/>
</dbReference>
<dbReference type="HAMAP" id="MF_01874">
    <property type="entry name" value="UPF0756"/>
    <property type="match status" value="1"/>
</dbReference>
<dbReference type="InterPro" id="IPR007382">
    <property type="entry name" value="UPF0756_TM"/>
</dbReference>
<dbReference type="PANTHER" id="PTHR38452">
    <property type="entry name" value="UPF0756 MEMBRANE PROTEIN YEAL"/>
    <property type="match status" value="1"/>
</dbReference>
<dbReference type="PANTHER" id="PTHR38452:SF1">
    <property type="entry name" value="UPF0756 MEMBRANE PROTEIN YEAL"/>
    <property type="match status" value="1"/>
</dbReference>
<dbReference type="Pfam" id="PF04284">
    <property type="entry name" value="DUF441"/>
    <property type="match status" value="1"/>
</dbReference>
<organism>
    <name type="scientific">Glaesserella parasuis serovar 5 (strain SH0165)</name>
    <name type="common">Haemophilus parasuis</name>
    <dbReference type="NCBI Taxonomy" id="557723"/>
    <lineage>
        <taxon>Bacteria</taxon>
        <taxon>Pseudomonadati</taxon>
        <taxon>Pseudomonadota</taxon>
        <taxon>Gammaproteobacteria</taxon>
        <taxon>Pasteurellales</taxon>
        <taxon>Pasteurellaceae</taxon>
        <taxon>Glaesserella</taxon>
    </lineage>
</organism>
<gene>
    <name type="ordered locus">HAPS_1649</name>
</gene>
<feature type="chain" id="PRO_0000388884" description="UPF0756 membrane protein HAPS_1649">
    <location>
        <begin position="1"/>
        <end position="150"/>
    </location>
</feature>
<feature type="transmembrane region" description="Helical" evidence="1">
    <location>
        <begin position="1"/>
        <end position="21"/>
    </location>
</feature>
<feature type="transmembrane region" description="Helical" evidence="1">
    <location>
        <begin position="27"/>
        <end position="46"/>
    </location>
</feature>
<feature type="transmembrane region" description="Helical" evidence="1">
    <location>
        <begin position="52"/>
        <end position="72"/>
    </location>
</feature>
<feature type="transmembrane region" description="Helical" evidence="1">
    <location>
        <begin position="82"/>
        <end position="102"/>
    </location>
</feature>
<feature type="transmembrane region" description="Helical" evidence="1">
    <location>
        <begin position="123"/>
        <end position="143"/>
    </location>
</feature>
<reference key="1">
    <citation type="journal article" date="2009" name="J. Bacteriol.">
        <title>Complete genome sequence of Haemophilus parasuis SH0165.</title>
        <authorList>
            <person name="Yue M."/>
            <person name="Yang F."/>
            <person name="Yang J."/>
            <person name="Bei W."/>
            <person name="Cai X."/>
            <person name="Chen L."/>
            <person name="Dong J."/>
            <person name="Zhou R."/>
            <person name="Jin M."/>
            <person name="Jin Q."/>
            <person name="Chen H."/>
        </authorList>
    </citation>
    <scope>NUCLEOTIDE SEQUENCE [LARGE SCALE GENOMIC DNA]</scope>
    <source>
        <strain>SH0165</strain>
    </source>
</reference>
<proteinExistence type="inferred from homology"/>
<name>Y1649_GLAP5</name>
<evidence type="ECO:0000255" key="1">
    <source>
        <dbReference type="HAMAP-Rule" id="MF_01874"/>
    </source>
</evidence>
<keyword id="KW-1003">Cell membrane</keyword>
<keyword id="KW-0472">Membrane</keyword>
<keyword id="KW-1185">Reference proteome</keyword>
<keyword id="KW-0812">Transmembrane</keyword>
<keyword id="KW-1133">Transmembrane helix</keyword>
<comment type="subcellular location">
    <subcellularLocation>
        <location evidence="1">Cell membrane</location>
        <topology evidence="1">Multi-pass membrane protein</topology>
    </subcellularLocation>
</comment>
<comment type="similarity">
    <text evidence="1">Belongs to the UPF0756 family.</text>
</comment>